<protein>
    <recommendedName>
        <fullName evidence="1">Deoxyribose-phosphate aldolase</fullName>
        <shortName evidence="1">DERA</shortName>
        <ecNumber evidence="1">4.1.2.4</ecNumber>
    </recommendedName>
    <alternativeName>
        <fullName evidence="1">2-deoxy-D-ribose 5-phosphate aldolase</fullName>
    </alternativeName>
    <alternativeName>
        <fullName evidence="1">Phosphodeoxyriboaldolase</fullName>
        <shortName evidence="1">Deoxyriboaldolase</shortName>
    </alternativeName>
</protein>
<evidence type="ECO:0000255" key="1">
    <source>
        <dbReference type="HAMAP-Rule" id="MF_00114"/>
    </source>
</evidence>
<proteinExistence type="inferred from homology"/>
<name>DEOC_MYCPA</name>
<feature type="chain" id="PRO_0000231549" description="Deoxyribose-phosphate aldolase">
    <location>
        <begin position="1"/>
        <end position="223"/>
    </location>
</feature>
<feature type="active site" description="Proton donor/acceptor" evidence="1">
    <location>
        <position position="92"/>
    </location>
</feature>
<feature type="active site" description="Schiff-base intermediate with acetaldehyde" evidence="1">
    <location>
        <position position="158"/>
    </location>
</feature>
<feature type="active site" description="Proton donor/acceptor" evidence="1">
    <location>
        <position position="188"/>
    </location>
</feature>
<sequence>MTPTRAQLAAFVDHTLLKPEATAADVAALVTEAAELGVYAVCVSPTMVPAAVQAGAGVRVASVAGFPSGKHVSAVKAHEAALAVASGAAEIDMVIDVGAALAGDLDGVRADIAAVRDAVGGAVLKVIVESSALLALADEHTLVRVCRAAEDAGADFVKTSTGFHPTGGASVRAVALMAEAVGGRLGVKASGGIRTAADALAMLDAGATRLGLSGTRAVLDGLG</sequence>
<dbReference type="EC" id="4.1.2.4" evidence="1"/>
<dbReference type="EMBL" id="AE016958">
    <property type="protein sequence ID" value="AAS06521.1"/>
    <property type="molecule type" value="Genomic_DNA"/>
</dbReference>
<dbReference type="RefSeq" id="WP_003873732.1">
    <property type="nucleotide sequence ID" value="NZ_CP106873.1"/>
</dbReference>
<dbReference type="SMR" id="Q73SV2"/>
<dbReference type="STRING" id="262316.MAP_3971"/>
<dbReference type="KEGG" id="mpa:MAP_3971"/>
<dbReference type="eggNOG" id="COG0274">
    <property type="taxonomic scope" value="Bacteria"/>
</dbReference>
<dbReference type="HOGENOM" id="CLU_053595_0_0_11"/>
<dbReference type="UniPathway" id="UPA00002">
    <property type="reaction ID" value="UER00468"/>
</dbReference>
<dbReference type="Proteomes" id="UP000000580">
    <property type="component" value="Chromosome"/>
</dbReference>
<dbReference type="GO" id="GO:0005737">
    <property type="term" value="C:cytoplasm"/>
    <property type="evidence" value="ECO:0007669"/>
    <property type="project" value="UniProtKB-SubCell"/>
</dbReference>
<dbReference type="GO" id="GO:0004139">
    <property type="term" value="F:deoxyribose-phosphate aldolase activity"/>
    <property type="evidence" value="ECO:0007669"/>
    <property type="project" value="UniProtKB-UniRule"/>
</dbReference>
<dbReference type="GO" id="GO:0006018">
    <property type="term" value="P:2-deoxyribose 1-phosphate catabolic process"/>
    <property type="evidence" value="ECO:0007669"/>
    <property type="project" value="UniProtKB-UniRule"/>
</dbReference>
<dbReference type="GO" id="GO:0016052">
    <property type="term" value="P:carbohydrate catabolic process"/>
    <property type="evidence" value="ECO:0007669"/>
    <property type="project" value="TreeGrafter"/>
</dbReference>
<dbReference type="GO" id="GO:0009264">
    <property type="term" value="P:deoxyribonucleotide catabolic process"/>
    <property type="evidence" value="ECO:0007669"/>
    <property type="project" value="InterPro"/>
</dbReference>
<dbReference type="CDD" id="cd00959">
    <property type="entry name" value="DeoC"/>
    <property type="match status" value="1"/>
</dbReference>
<dbReference type="FunFam" id="3.20.20.70:FF:000044">
    <property type="entry name" value="Deoxyribose-phosphate aldolase"/>
    <property type="match status" value="1"/>
</dbReference>
<dbReference type="Gene3D" id="3.20.20.70">
    <property type="entry name" value="Aldolase class I"/>
    <property type="match status" value="1"/>
</dbReference>
<dbReference type="HAMAP" id="MF_00114">
    <property type="entry name" value="DeoC_type1"/>
    <property type="match status" value="1"/>
</dbReference>
<dbReference type="InterPro" id="IPR013785">
    <property type="entry name" value="Aldolase_TIM"/>
</dbReference>
<dbReference type="InterPro" id="IPR011343">
    <property type="entry name" value="DeoC"/>
</dbReference>
<dbReference type="InterPro" id="IPR002915">
    <property type="entry name" value="DeoC/FbaB/LacD_aldolase"/>
</dbReference>
<dbReference type="InterPro" id="IPR028581">
    <property type="entry name" value="DeoC_typeI"/>
</dbReference>
<dbReference type="NCBIfam" id="TIGR00126">
    <property type="entry name" value="deoC"/>
    <property type="match status" value="1"/>
</dbReference>
<dbReference type="PANTHER" id="PTHR10889">
    <property type="entry name" value="DEOXYRIBOSE-PHOSPHATE ALDOLASE"/>
    <property type="match status" value="1"/>
</dbReference>
<dbReference type="PANTHER" id="PTHR10889:SF1">
    <property type="entry name" value="DEOXYRIBOSE-PHOSPHATE ALDOLASE"/>
    <property type="match status" value="1"/>
</dbReference>
<dbReference type="Pfam" id="PF01791">
    <property type="entry name" value="DeoC"/>
    <property type="match status" value="1"/>
</dbReference>
<dbReference type="PIRSF" id="PIRSF001357">
    <property type="entry name" value="DeoC"/>
    <property type="match status" value="1"/>
</dbReference>
<dbReference type="SMART" id="SM01133">
    <property type="entry name" value="DeoC"/>
    <property type="match status" value="1"/>
</dbReference>
<dbReference type="SUPFAM" id="SSF51569">
    <property type="entry name" value="Aldolase"/>
    <property type="match status" value="1"/>
</dbReference>
<keyword id="KW-0963">Cytoplasm</keyword>
<keyword id="KW-0456">Lyase</keyword>
<keyword id="KW-1185">Reference proteome</keyword>
<keyword id="KW-0704">Schiff base</keyword>
<comment type="function">
    <text evidence="1">Catalyzes a reversible aldol reaction between acetaldehyde and D-glyceraldehyde 3-phosphate to generate 2-deoxy-D-ribose 5-phosphate.</text>
</comment>
<comment type="catalytic activity">
    <reaction evidence="1">
        <text>2-deoxy-D-ribose 5-phosphate = D-glyceraldehyde 3-phosphate + acetaldehyde</text>
        <dbReference type="Rhea" id="RHEA:12821"/>
        <dbReference type="ChEBI" id="CHEBI:15343"/>
        <dbReference type="ChEBI" id="CHEBI:59776"/>
        <dbReference type="ChEBI" id="CHEBI:62877"/>
        <dbReference type="EC" id="4.1.2.4"/>
    </reaction>
</comment>
<comment type="pathway">
    <text evidence="1">Carbohydrate degradation; 2-deoxy-D-ribose 1-phosphate degradation; D-glyceraldehyde 3-phosphate and acetaldehyde from 2-deoxy-alpha-D-ribose 1-phosphate: step 2/2.</text>
</comment>
<comment type="subcellular location">
    <subcellularLocation>
        <location evidence="1">Cytoplasm</location>
    </subcellularLocation>
</comment>
<comment type="similarity">
    <text evidence="1">Belongs to the DeoC/FbaB aldolase family. DeoC type 1 subfamily.</text>
</comment>
<accession>Q73SV2</accession>
<gene>
    <name evidence="1" type="primary">deoC</name>
    <name type="ordered locus">MAP_3971</name>
</gene>
<organism>
    <name type="scientific">Mycolicibacterium paratuberculosis (strain ATCC BAA-968 / K-10)</name>
    <name type="common">Mycobacterium paratuberculosis</name>
    <dbReference type="NCBI Taxonomy" id="262316"/>
    <lineage>
        <taxon>Bacteria</taxon>
        <taxon>Bacillati</taxon>
        <taxon>Actinomycetota</taxon>
        <taxon>Actinomycetes</taxon>
        <taxon>Mycobacteriales</taxon>
        <taxon>Mycobacteriaceae</taxon>
        <taxon>Mycobacterium</taxon>
        <taxon>Mycobacterium avium complex (MAC)</taxon>
    </lineage>
</organism>
<reference key="1">
    <citation type="journal article" date="2005" name="Proc. Natl. Acad. Sci. U.S.A.">
        <title>The complete genome sequence of Mycobacterium avium subspecies paratuberculosis.</title>
        <authorList>
            <person name="Li L."/>
            <person name="Bannantine J.P."/>
            <person name="Zhang Q."/>
            <person name="Amonsin A."/>
            <person name="May B.J."/>
            <person name="Alt D."/>
            <person name="Banerji N."/>
            <person name="Kanjilal S."/>
            <person name="Kapur V."/>
        </authorList>
    </citation>
    <scope>NUCLEOTIDE SEQUENCE [LARGE SCALE GENOMIC DNA]</scope>
    <source>
        <strain>ATCC BAA-968 / K-10</strain>
    </source>
</reference>